<feature type="initiator methionine" description="Removed" evidence="2">
    <location>
        <position position="1"/>
    </location>
</feature>
<feature type="chain" id="PRO_0000212528" description="Mediator of RNA polymerase II transcription subunit 31">
    <location>
        <begin position="2"/>
        <end position="131"/>
    </location>
</feature>
<feature type="modified residue" description="N-acetylalanine" evidence="2">
    <location>
        <position position="2"/>
    </location>
</feature>
<feature type="sequence conflict" description="In Ref. 1; BAB29102." evidence="3" ref="1">
    <original>K</original>
    <variation>E</variation>
    <location>
        <position position="86"/>
    </location>
</feature>
<gene>
    <name type="primary">Med31</name>
    <name type="synonym">Soh1</name>
</gene>
<accession>Q9CXU1</accession>
<accession>Q9DAP5</accession>
<reference key="1">
    <citation type="journal article" date="2005" name="Science">
        <title>The transcriptional landscape of the mammalian genome.</title>
        <authorList>
            <person name="Carninci P."/>
            <person name="Kasukawa T."/>
            <person name="Katayama S."/>
            <person name="Gough J."/>
            <person name="Frith M.C."/>
            <person name="Maeda N."/>
            <person name="Oyama R."/>
            <person name="Ravasi T."/>
            <person name="Lenhard B."/>
            <person name="Wells C."/>
            <person name="Kodzius R."/>
            <person name="Shimokawa K."/>
            <person name="Bajic V.B."/>
            <person name="Brenner S.E."/>
            <person name="Batalov S."/>
            <person name="Forrest A.R."/>
            <person name="Zavolan M."/>
            <person name="Davis M.J."/>
            <person name="Wilming L.G."/>
            <person name="Aidinis V."/>
            <person name="Allen J.E."/>
            <person name="Ambesi-Impiombato A."/>
            <person name="Apweiler R."/>
            <person name="Aturaliya R.N."/>
            <person name="Bailey T.L."/>
            <person name="Bansal M."/>
            <person name="Baxter L."/>
            <person name="Beisel K.W."/>
            <person name="Bersano T."/>
            <person name="Bono H."/>
            <person name="Chalk A.M."/>
            <person name="Chiu K.P."/>
            <person name="Choudhary V."/>
            <person name="Christoffels A."/>
            <person name="Clutterbuck D.R."/>
            <person name="Crowe M.L."/>
            <person name="Dalla E."/>
            <person name="Dalrymple B.P."/>
            <person name="de Bono B."/>
            <person name="Della Gatta G."/>
            <person name="di Bernardo D."/>
            <person name="Down T."/>
            <person name="Engstrom P."/>
            <person name="Fagiolini M."/>
            <person name="Faulkner G."/>
            <person name="Fletcher C.F."/>
            <person name="Fukushima T."/>
            <person name="Furuno M."/>
            <person name="Futaki S."/>
            <person name="Gariboldi M."/>
            <person name="Georgii-Hemming P."/>
            <person name="Gingeras T.R."/>
            <person name="Gojobori T."/>
            <person name="Green R.E."/>
            <person name="Gustincich S."/>
            <person name="Harbers M."/>
            <person name="Hayashi Y."/>
            <person name="Hensch T.K."/>
            <person name="Hirokawa N."/>
            <person name="Hill D."/>
            <person name="Huminiecki L."/>
            <person name="Iacono M."/>
            <person name="Ikeo K."/>
            <person name="Iwama A."/>
            <person name="Ishikawa T."/>
            <person name="Jakt M."/>
            <person name="Kanapin A."/>
            <person name="Katoh M."/>
            <person name="Kawasawa Y."/>
            <person name="Kelso J."/>
            <person name="Kitamura H."/>
            <person name="Kitano H."/>
            <person name="Kollias G."/>
            <person name="Krishnan S.P."/>
            <person name="Kruger A."/>
            <person name="Kummerfeld S.K."/>
            <person name="Kurochkin I.V."/>
            <person name="Lareau L.F."/>
            <person name="Lazarevic D."/>
            <person name="Lipovich L."/>
            <person name="Liu J."/>
            <person name="Liuni S."/>
            <person name="McWilliam S."/>
            <person name="Madan Babu M."/>
            <person name="Madera M."/>
            <person name="Marchionni L."/>
            <person name="Matsuda H."/>
            <person name="Matsuzawa S."/>
            <person name="Miki H."/>
            <person name="Mignone F."/>
            <person name="Miyake S."/>
            <person name="Morris K."/>
            <person name="Mottagui-Tabar S."/>
            <person name="Mulder N."/>
            <person name="Nakano N."/>
            <person name="Nakauchi H."/>
            <person name="Ng P."/>
            <person name="Nilsson R."/>
            <person name="Nishiguchi S."/>
            <person name="Nishikawa S."/>
            <person name="Nori F."/>
            <person name="Ohara O."/>
            <person name="Okazaki Y."/>
            <person name="Orlando V."/>
            <person name="Pang K.C."/>
            <person name="Pavan W.J."/>
            <person name="Pavesi G."/>
            <person name="Pesole G."/>
            <person name="Petrovsky N."/>
            <person name="Piazza S."/>
            <person name="Reed J."/>
            <person name="Reid J.F."/>
            <person name="Ring B.Z."/>
            <person name="Ringwald M."/>
            <person name="Rost B."/>
            <person name="Ruan Y."/>
            <person name="Salzberg S.L."/>
            <person name="Sandelin A."/>
            <person name="Schneider C."/>
            <person name="Schoenbach C."/>
            <person name="Sekiguchi K."/>
            <person name="Semple C.A."/>
            <person name="Seno S."/>
            <person name="Sessa L."/>
            <person name="Sheng Y."/>
            <person name="Shibata Y."/>
            <person name="Shimada H."/>
            <person name="Shimada K."/>
            <person name="Silva D."/>
            <person name="Sinclair B."/>
            <person name="Sperling S."/>
            <person name="Stupka E."/>
            <person name="Sugiura K."/>
            <person name="Sultana R."/>
            <person name="Takenaka Y."/>
            <person name="Taki K."/>
            <person name="Tammoja K."/>
            <person name="Tan S.L."/>
            <person name="Tang S."/>
            <person name="Taylor M.S."/>
            <person name="Tegner J."/>
            <person name="Teichmann S.A."/>
            <person name="Ueda H.R."/>
            <person name="van Nimwegen E."/>
            <person name="Verardo R."/>
            <person name="Wei C.L."/>
            <person name="Yagi K."/>
            <person name="Yamanishi H."/>
            <person name="Zabarovsky E."/>
            <person name="Zhu S."/>
            <person name="Zimmer A."/>
            <person name="Hide W."/>
            <person name="Bult C."/>
            <person name="Grimmond S.M."/>
            <person name="Teasdale R.D."/>
            <person name="Liu E.T."/>
            <person name="Brusic V."/>
            <person name="Quackenbush J."/>
            <person name="Wahlestedt C."/>
            <person name="Mattick J.S."/>
            <person name="Hume D.A."/>
            <person name="Kai C."/>
            <person name="Sasaki D."/>
            <person name="Tomaru Y."/>
            <person name="Fukuda S."/>
            <person name="Kanamori-Katayama M."/>
            <person name="Suzuki M."/>
            <person name="Aoki J."/>
            <person name="Arakawa T."/>
            <person name="Iida J."/>
            <person name="Imamura K."/>
            <person name="Itoh M."/>
            <person name="Kato T."/>
            <person name="Kawaji H."/>
            <person name="Kawagashira N."/>
            <person name="Kawashima T."/>
            <person name="Kojima M."/>
            <person name="Kondo S."/>
            <person name="Konno H."/>
            <person name="Nakano K."/>
            <person name="Ninomiya N."/>
            <person name="Nishio T."/>
            <person name="Okada M."/>
            <person name="Plessy C."/>
            <person name="Shibata K."/>
            <person name="Shiraki T."/>
            <person name="Suzuki S."/>
            <person name="Tagami M."/>
            <person name="Waki K."/>
            <person name="Watahiki A."/>
            <person name="Okamura-Oho Y."/>
            <person name="Suzuki H."/>
            <person name="Kawai J."/>
            <person name="Hayashizaki Y."/>
        </authorList>
    </citation>
    <scope>NUCLEOTIDE SEQUENCE [LARGE SCALE MRNA]</scope>
    <source>
        <strain>C57BL/6J</strain>
        <tissue>Embryo</tissue>
        <tissue>Testis</tissue>
    </source>
</reference>
<reference key="2">
    <citation type="journal article" date="2009" name="PLoS Biol.">
        <title>Lineage-specific biology revealed by a finished genome assembly of the mouse.</title>
        <authorList>
            <person name="Church D.M."/>
            <person name="Goodstadt L."/>
            <person name="Hillier L.W."/>
            <person name="Zody M.C."/>
            <person name="Goldstein S."/>
            <person name="She X."/>
            <person name="Bult C.J."/>
            <person name="Agarwala R."/>
            <person name="Cherry J.L."/>
            <person name="DiCuccio M."/>
            <person name="Hlavina W."/>
            <person name="Kapustin Y."/>
            <person name="Meric P."/>
            <person name="Maglott D."/>
            <person name="Birtle Z."/>
            <person name="Marques A.C."/>
            <person name="Graves T."/>
            <person name="Zhou S."/>
            <person name="Teague B."/>
            <person name="Potamousis K."/>
            <person name="Churas C."/>
            <person name="Place M."/>
            <person name="Herschleb J."/>
            <person name="Runnheim R."/>
            <person name="Forrest D."/>
            <person name="Amos-Landgraf J."/>
            <person name="Schwartz D.C."/>
            <person name="Cheng Z."/>
            <person name="Lindblad-Toh K."/>
            <person name="Eichler E.E."/>
            <person name="Ponting C.P."/>
        </authorList>
    </citation>
    <scope>NUCLEOTIDE SEQUENCE [LARGE SCALE GENOMIC DNA]</scope>
    <source>
        <strain>C57BL/6J</strain>
    </source>
</reference>
<reference key="3">
    <citation type="journal article" date="2004" name="Genome Res.">
        <title>The status, quality, and expansion of the NIH full-length cDNA project: the Mammalian Gene Collection (MGC).</title>
        <authorList>
            <consortium name="The MGC Project Team"/>
        </authorList>
    </citation>
    <scope>NUCLEOTIDE SEQUENCE [LARGE SCALE MRNA]</scope>
    <source>
        <strain>C57BL/6J</strain>
        <tissue>Brain</tissue>
        <tissue>Mammary tumor</tissue>
    </source>
</reference>
<reference key="4">
    <citation type="journal article" date="2010" name="Cell">
        <title>A tissue-specific atlas of mouse protein phosphorylation and expression.</title>
        <authorList>
            <person name="Huttlin E.L."/>
            <person name="Jedrychowski M.P."/>
            <person name="Elias J.E."/>
            <person name="Goswami T."/>
            <person name="Rad R."/>
            <person name="Beausoleil S.A."/>
            <person name="Villen J."/>
            <person name="Haas W."/>
            <person name="Sowa M.E."/>
            <person name="Gygi S.P."/>
        </authorList>
    </citation>
    <scope>IDENTIFICATION BY MASS SPECTROMETRY [LARGE SCALE ANALYSIS]</scope>
    <source>
        <tissue>Brain</tissue>
        <tissue>Liver</tissue>
        <tissue>Spleen</tissue>
        <tissue>Testis</tissue>
    </source>
</reference>
<evidence type="ECO:0000250" key="1"/>
<evidence type="ECO:0000250" key="2">
    <source>
        <dbReference type="UniProtKB" id="Q9Y3C7"/>
    </source>
</evidence>
<evidence type="ECO:0000305" key="3"/>
<organism>
    <name type="scientific">Mus musculus</name>
    <name type="common">Mouse</name>
    <dbReference type="NCBI Taxonomy" id="10090"/>
    <lineage>
        <taxon>Eukaryota</taxon>
        <taxon>Metazoa</taxon>
        <taxon>Chordata</taxon>
        <taxon>Craniata</taxon>
        <taxon>Vertebrata</taxon>
        <taxon>Euteleostomi</taxon>
        <taxon>Mammalia</taxon>
        <taxon>Eutheria</taxon>
        <taxon>Euarchontoglires</taxon>
        <taxon>Glires</taxon>
        <taxon>Rodentia</taxon>
        <taxon>Myomorpha</taxon>
        <taxon>Muroidea</taxon>
        <taxon>Muridae</taxon>
        <taxon>Murinae</taxon>
        <taxon>Mus</taxon>
        <taxon>Mus</taxon>
    </lineage>
</organism>
<sequence length="131" mass="15771">MAAAVAMETDDAGNRLRFQLELEFVQCLANPNYLNFLAQRGYFKDKAFVNYLKYLLYWKEPEYAKYLKYPQCLHMLELLQYEHFRKELVNAQCAKFIDEQQILHWQHYSRKRVRLQQALAEQQQQNNTAGK</sequence>
<name>MED31_MOUSE</name>
<comment type="function">
    <text evidence="1">Component of the Mediator complex, a coactivator involved in the regulated transcription of nearly all RNA polymerase II-dependent genes. Mediator functions as a bridge to convey information from gene-specific regulatory proteins to the basal RNA polymerase II transcription machinery. Mediator is recruited to promoters by direct interactions with regulatory proteins and serves as a scaffold for the assembly of a functional preinitiation complex with RNA polymerase II and the general transcription factors (By similarity).</text>
</comment>
<comment type="subunit">
    <text evidence="1">Component of the Mediator complex, which is composed of MED1, MED4, MED6, MED7, MED8, MED9, MED10, MED11, MED12, MED13, MED13L, MED14, MED15, MED16, MED17, MED18, MED19, MED20, MED21, MED22, MED23, MED24, MED25, MED26, MED27, MED29, MED30, MED31, CCNC, CDK8 and CDC2L6/CDK11. The MED12, MED13, CCNC and CDK8 subunits form a distinct module termed the CDK8 module. Mediator containing the CDK8 module is less active than Mediator lacking this module in supporting transcriptional activation. Individual preparations of the Mediator complex lacking one or more distinct subunits have been variously termed ARC, CRSP, DRIP, PC2, SMCC and TRAP (By similarity).</text>
</comment>
<comment type="interaction">
    <interactant intactId="EBI-309355">
        <id>Q9CXU1</id>
    </interactant>
    <interactant intactId="EBI-398761">
        <id>Q8C1S0</id>
        <label>Med19</label>
    </interactant>
    <organismsDiffer>false</organismsDiffer>
    <experiments>2</experiments>
</comment>
<comment type="subcellular location">
    <subcellularLocation>
        <location evidence="3">Nucleus</location>
    </subcellularLocation>
</comment>
<comment type="similarity">
    <text evidence="3">Belongs to the Mediator complex subunit 31 family.</text>
</comment>
<proteinExistence type="evidence at protein level"/>
<dbReference type="EMBL" id="AK005655">
    <property type="protein sequence ID" value="BAB24169.1"/>
    <property type="molecule type" value="mRNA"/>
</dbReference>
<dbReference type="EMBL" id="AK013990">
    <property type="protein sequence ID" value="BAB29102.1"/>
    <property type="molecule type" value="mRNA"/>
</dbReference>
<dbReference type="EMBL" id="BX119911">
    <property type="status" value="NOT_ANNOTATED_CDS"/>
    <property type="molecule type" value="Genomic_DNA"/>
</dbReference>
<dbReference type="EMBL" id="BC019685">
    <property type="protein sequence ID" value="AAH19685.1"/>
    <property type="molecule type" value="mRNA"/>
</dbReference>
<dbReference type="EMBL" id="BC051929">
    <property type="protein sequence ID" value="AAH51929.1"/>
    <property type="molecule type" value="mRNA"/>
</dbReference>
<dbReference type="CCDS" id="CCDS24981.1"/>
<dbReference type="RefSeq" id="NP_080344.2">
    <property type="nucleotide sequence ID" value="NM_026068.2"/>
</dbReference>
<dbReference type="PDB" id="6W1S">
    <property type="method" value="EM"/>
    <property type="resolution" value="4.02 A"/>
    <property type="chains" value="Z=13-105"/>
</dbReference>
<dbReference type="PDB" id="8T1I">
    <property type="method" value="EM"/>
    <property type="resolution" value="4.68 A"/>
    <property type="chains" value="Z=1-131"/>
</dbReference>
<dbReference type="PDB" id="8T1L">
    <property type="method" value="EM"/>
    <property type="resolution" value="4.83 A"/>
    <property type="chains" value="Z=1-131"/>
</dbReference>
<dbReference type="PDBsum" id="6W1S"/>
<dbReference type="PDBsum" id="8T1I"/>
<dbReference type="PDBsum" id="8T1L"/>
<dbReference type="EMDB" id="EMD-21514"/>
<dbReference type="EMDB" id="EMD-40968"/>
<dbReference type="EMDB" id="EMD-40971"/>
<dbReference type="SMR" id="Q9CXU1"/>
<dbReference type="BioGRID" id="212068">
    <property type="interactions" value="2"/>
</dbReference>
<dbReference type="ComplexPortal" id="CPX-3264">
    <property type="entry name" value="Core mediator complex"/>
</dbReference>
<dbReference type="FunCoup" id="Q9CXU1">
    <property type="interactions" value="2868"/>
</dbReference>
<dbReference type="IntAct" id="Q9CXU1">
    <property type="interactions" value="10"/>
</dbReference>
<dbReference type="MINT" id="Q9CXU1"/>
<dbReference type="STRING" id="10090.ENSMUSP00000021157"/>
<dbReference type="iPTMnet" id="Q9CXU1"/>
<dbReference type="PhosphoSitePlus" id="Q9CXU1"/>
<dbReference type="PaxDb" id="10090-ENSMUSP00000021157"/>
<dbReference type="PeptideAtlas" id="Q9CXU1"/>
<dbReference type="ProteomicsDB" id="293453"/>
<dbReference type="Pumba" id="Q9CXU1"/>
<dbReference type="Antibodypedia" id="23820">
    <property type="antibodies" value="112 antibodies from 25 providers"/>
</dbReference>
<dbReference type="DNASU" id="67279"/>
<dbReference type="Ensembl" id="ENSMUST00000021157.9">
    <property type="protein sequence ID" value="ENSMUSP00000021157.9"/>
    <property type="gene ID" value="ENSMUSG00000020801.9"/>
</dbReference>
<dbReference type="GeneID" id="67279"/>
<dbReference type="KEGG" id="mmu:67279"/>
<dbReference type="UCSC" id="uc007jyk.1">
    <property type="organism name" value="mouse"/>
</dbReference>
<dbReference type="AGR" id="MGI:1914529"/>
<dbReference type="CTD" id="51003"/>
<dbReference type="MGI" id="MGI:1914529">
    <property type="gene designation" value="Med31"/>
</dbReference>
<dbReference type="VEuPathDB" id="HostDB:ENSMUSG00000020801"/>
<dbReference type="eggNOG" id="KOG4086">
    <property type="taxonomic scope" value="Eukaryota"/>
</dbReference>
<dbReference type="GeneTree" id="ENSGT00390000015531"/>
<dbReference type="HOGENOM" id="CLU_071681_5_1_1"/>
<dbReference type="InParanoid" id="Q9CXU1"/>
<dbReference type="OMA" id="QGILNQP"/>
<dbReference type="OrthoDB" id="10257739at2759"/>
<dbReference type="PhylomeDB" id="Q9CXU1"/>
<dbReference type="TreeFam" id="TF105799"/>
<dbReference type="BioGRID-ORCS" id="67279">
    <property type="hits" value="21 hits in 80 CRISPR screens"/>
</dbReference>
<dbReference type="ChiTaRS" id="Med31">
    <property type="organism name" value="mouse"/>
</dbReference>
<dbReference type="PRO" id="PR:Q9CXU1"/>
<dbReference type="Proteomes" id="UP000000589">
    <property type="component" value="Chromosome 11"/>
</dbReference>
<dbReference type="RNAct" id="Q9CXU1">
    <property type="molecule type" value="protein"/>
</dbReference>
<dbReference type="Bgee" id="ENSMUSG00000020801">
    <property type="expression patterns" value="Expressed in endocardial cushion and 248 other cell types or tissues"/>
</dbReference>
<dbReference type="GO" id="GO:0070847">
    <property type="term" value="C:core mediator complex"/>
    <property type="evidence" value="ECO:0000266"/>
    <property type="project" value="ComplexPortal"/>
</dbReference>
<dbReference type="GO" id="GO:0016592">
    <property type="term" value="C:mediator complex"/>
    <property type="evidence" value="ECO:0000314"/>
    <property type="project" value="MGI"/>
</dbReference>
<dbReference type="GO" id="GO:0005654">
    <property type="term" value="C:nucleoplasm"/>
    <property type="evidence" value="ECO:0000304"/>
    <property type="project" value="Reactome"/>
</dbReference>
<dbReference type="GO" id="GO:0005634">
    <property type="term" value="C:nucleus"/>
    <property type="evidence" value="ECO:0000266"/>
    <property type="project" value="ComplexPortal"/>
</dbReference>
<dbReference type="GO" id="GO:0000151">
    <property type="term" value="C:ubiquitin ligase complex"/>
    <property type="evidence" value="ECO:0007669"/>
    <property type="project" value="Ensembl"/>
</dbReference>
<dbReference type="GO" id="GO:0003712">
    <property type="term" value="F:transcription coregulator activity"/>
    <property type="evidence" value="ECO:0007669"/>
    <property type="project" value="InterPro"/>
</dbReference>
<dbReference type="GO" id="GO:0061630">
    <property type="term" value="F:ubiquitin protein ligase activity"/>
    <property type="evidence" value="ECO:0007669"/>
    <property type="project" value="Ensembl"/>
</dbReference>
<dbReference type="GO" id="GO:0060173">
    <property type="term" value="P:limb development"/>
    <property type="evidence" value="ECO:0000315"/>
    <property type="project" value="MGI"/>
</dbReference>
<dbReference type="GO" id="GO:0048147">
    <property type="term" value="P:negative regulation of fibroblast proliferation"/>
    <property type="evidence" value="ECO:0000315"/>
    <property type="project" value="MGI"/>
</dbReference>
<dbReference type="GO" id="GO:0032968">
    <property type="term" value="P:positive regulation of transcription elongation by RNA polymerase II"/>
    <property type="evidence" value="ECO:0000303"/>
    <property type="project" value="ComplexPortal"/>
</dbReference>
<dbReference type="GO" id="GO:0060261">
    <property type="term" value="P:positive regulation of transcription initiation by RNA polymerase II"/>
    <property type="evidence" value="ECO:0000303"/>
    <property type="project" value="ComplexPortal"/>
</dbReference>
<dbReference type="GO" id="GO:0016567">
    <property type="term" value="P:protein ubiquitination"/>
    <property type="evidence" value="ECO:0007669"/>
    <property type="project" value="Ensembl"/>
</dbReference>
<dbReference type="GO" id="GO:0051123">
    <property type="term" value="P:RNA polymerase II preinitiation complex assembly"/>
    <property type="evidence" value="ECO:0000303"/>
    <property type="project" value="ComplexPortal"/>
</dbReference>
<dbReference type="FunFam" id="1.10.10.1340:FF:000001">
    <property type="entry name" value="Mediator of RNA polymerase II transcription subunit 31"/>
    <property type="match status" value="1"/>
</dbReference>
<dbReference type="Gene3D" id="1.10.10.1340">
    <property type="entry name" value="Mediator of RNA polymerase II, submodule Med31 (Soh1)"/>
    <property type="match status" value="1"/>
</dbReference>
<dbReference type="InterPro" id="IPR038089">
    <property type="entry name" value="Med31_sf"/>
</dbReference>
<dbReference type="InterPro" id="IPR008831">
    <property type="entry name" value="Mediator_Med31"/>
</dbReference>
<dbReference type="PANTHER" id="PTHR13186">
    <property type="entry name" value="MEDIATOR OF RNA POLYMERASE II TRANSCRIPTION SUBUNIT 31"/>
    <property type="match status" value="1"/>
</dbReference>
<dbReference type="Pfam" id="PF05669">
    <property type="entry name" value="Med31"/>
    <property type="match status" value="1"/>
</dbReference>
<keyword id="KW-0002">3D-structure</keyword>
<keyword id="KW-0007">Acetylation</keyword>
<keyword id="KW-0010">Activator</keyword>
<keyword id="KW-0539">Nucleus</keyword>
<keyword id="KW-1185">Reference proteome</keyword>
<keyword id="KW-0804">Transcription</keyword>
<keyword id="KW-0805">Transcription regulation</keyword>
<protein>
    <recommendedName>
        <fullName>Mediator of RNA polymerase II transcription subunit 31</fullName>
    </recommendedName>
    <alternativeName>
        <fullName>Mediator complex subunit 31</fullName>
    </alternativeName>
    <alternativeName>
        <fullName>Mediator complex subunit SOH1</fullName>
    </alternativeName>
</protein>